<accession>P83370</accession>
<accession>Q58L92</accession>
<evidence type="ECO:0000250" key="1"/>
<evidence type="ECO:0000255" key="2"/>
<evidence type="ECO:0000255" key="3">
    <source>
        <dbReference type="PROSITE-ProRule" id="PRU00076"/>
    </source>
</evidence>
<evidence type="ECO:0000255" key="4">
    <source>
        <dbReference type="PROSITE-ProRule" id="PRU00274"/>
    </source>
</evidence>
<evidence type="ECO:0000255" key="5">
    <source>
        <dbReference type="PROSITE-ProRule" id="PRU00463"/>
    </source>
</evidence>
<evidence type="ECO:0000269" key="6">
    <source>
    </source>
</evidence>
<evidence type="ECO:0000305" key="7"/>
<protein>
    <recommendedName>
        <fullName>Venom prothrombin activator hopsarin-D</fullName>
        <shortName>vPA</shortName>
        <ecNumber>3.4.21.6</ecNumber>
    </recommendedName>
    <alternativeName>
        <fullName>Venom coagulation factor Xa-like protease</fullName>
    </alternativeName>
    <component>
        <recommendedName>
            <fullName>Hopsarin-D light chain</fullName>
        </recommendedName>
    </component>
    <component>
        <recommendedName>
            <fullName>Hopsarin-D heavy chain</fullName>
        </recommendedName>
    </component>
</protein>
<proteinExistence type="evidence at protein level"/>
<comment type="function">
    <text evidence="6">Snake prothrombin activator that attacks the hemostatic system of prey. This protein is functionally similar to blood coagulation factor Xa. The procoagulant activity of hopsarin-D is approximately 10-fold lower than that of trocarin-D and FXa.</text>
</comment>
<comment type="catalytic activity">
    <reaction evidence="6">
        <text>Selective cleavage of Arg-|-Thr and then Arg-|-Ile bonds in prothrombin to form thrombin.</text>
        <dbReference type="EC" id="3.4.21.6"/>
    </reaction>
</comment>
<comment type="subunit">
    <text evidence="6">Heterodimer of a light chain and a heavy chain; disulfide-linked.</text>
</comment>
<comment type="subcellular location">
    <subcellularLocation>
        <location evidence="6">Secreted</location>
    </subcellularLocation>
</comment>
<comment type="tissue specificity">
    <text evidence="6">Expressed by the venom gland.</text>
</comment>
<comment type="PTM">
    <text evidence="1">The vitamin K-dependent, enzymatic carboxylation of some glutamate residues allows the modified protein to bind calcium.</text>
</comment>
<comment type="miscellaneous">
    <text>Is classified in the group D of snake venom prothrombin activators, since it requires the mammalian factor Va for maximal activity for the cleavage of prothrombin.</text>
</comment>
<comment type="miscellaneous">
    <text>In contrast to blood coagulation factors that circulate as inactive zymogen in plasma, venom prothrombin activators are always found in the active form in the venom.</text>
</comment>
<comment type="similarity">
    <text evidence="4">Belongs to the peptidase S1 family. Snake venom subfamily.</text>
</comment>
<comment type="caution">
    <text evidence="7">Lacks the Cys residue in position 216 that is replaced by a Ser residue, resulting of a loss a disulfide bond. This may contribute to the lower procoagulant activity.</text>
</comment>
<feature type="signal peptide" evidence="2">
    <location>
        <begin position="1"/>
        <end position="20"/>
    </location>
</feature>
<feature type="propeptide" id="PRO_0000409722" evidence="1">
    <location>
        <begin position="21"/>
        <end position="40"/>
    </location>
</feature>
<feature type="chain" id="PRO_0000027816" description="Hopsarin-D light chain">
    <location>
        <begin position="41"/>
        <end position="181"/>
    </location>
</feature>
<feature type="propeptide" id="PRO_5000095361" description="Activation peptide" evidence="6">
    <location>
        <begin position="182"/>
        <end position="209"/>
    </location>
</feature>
<feature type="chain" id="PRO_0000027817" description="Hopsarin-D heavy chain">
    <location>
        <begin position="210"/>
        <end position="455"/>
    </location>
</feature>
<feature type="domain" description="Gla" evidence="5">
    <location>
        <begin position="41"/>
        <end position="86"/>
    </location>
</feature>
<feature type="domain" description="EGF-like 1; calcium-binding" evidence="3">
    <location>
        <begin position="86"/>
        <end position="121"/>
    </location>
</feature>
<feature type="domain" description="EGF-like 2" evidence="3">
    <location>
        <begin position="129"/>
        <end position="164"/>
    </location>
</feature>
<feature type="domain" description="Peptidase S1" evidence="4">
    <location>
        <begin position="210"/>
        <end position="453"/>
    </location>
</feature>
<feature type="active site" description="Charge relay system" evidence="1">
    <location>
        <position position="251"/>
    </location>
</feature>
<feature type="active site" description="Charge relay system" evidence="1">
    <location>
        <position position="308"/>
    </location>
</feature>
<feature type="active site" description="Charge relay system" evidence="1">
    <location>
        <position position="405"/>
    </location>
</feature>
<feature type="site" description="Not modified">
    <location>
        <position position="103"/>
    </location>
</feature>
<feature type="modified residue" description="4-carboxyglutamate" evidence="5 6">
    <location>
        <position position="46"/>
    </location>
</feature>
<feature type="modified residue" description="4-carboxyglutamate" evidence="5 6">
    <location>
        <position position="47"/>
    </location>
</feature>
<feature type="modified residue" description="4-carboxyglutamate" evidence="5 6">
    <location>
        <position position="54"/>
    </location>
</feature>
<feature type="modified residue" description="4-carboxyglutamate" evidence="5 6">
    <location>
        <position position="56"/>
    </location>
</feature>
<feature type="modified residue" description="4-carboxyglutamate" evidence="5 6">
    <location>
        <position position="59"/>
    </location>
</feature>
<feature type="modified residue" description="4-carboxyglutamate" evidence="5 6">
    <location>
        <position position="60"/>
    </location>
</feature>
<feature type="modified residue" description="4-carboxyglutamate" evidence="5 6">
    <location>
        <position position="65"/>
    </location>
</feature>
<feature type="modified residue" description="4-carboxyglutamate" evidence="5 6">
    <location>
        <position position="66"/>
    </location>
</feature>
<feature type="modified residue" description="4-carboxyglutamate" evidence="5 6">
    <location>
        <position position="69"/>
    </location>
</feature>
<feature type="modified residue" description="4-carboxyglutamate" evidence="5 6">
    <location>
        <position position="72"/>
    </location>
</feature>
<feature type="modified residue" description="4-carboxyglutamate" evidence="5 6">
    <location>
        <position position="75"/>
    </location>
</feature>
<feature type="glycosylation site" description="O-linked (Hex...) serine" evidence="6">
    <location>
        <position position="92"/>
    </location>
</feature>
<feature type="glycosylation site" description="N-linked (GlcNAc...) asparagine" evidence="6">
    <location>
        <position position="254"/>
    </location>
</feature>
<feature type="disulfide bond" evidence="1">
    <location>
        <begin position="57"/>
        <end position="62"/>
    </location>
</feature>
<feature type="disulfide bond" evidence="1">
    <location>
        <begin position="90"/>
        <end position="101"/>
    </location>
</feature>
<feature type="disulfide bond" evidence="1">
    <location>
        <begin position="95"/>
        <end position="110"/>
    </location>
</feature>
<feature type="disulfide bond" evidence="1">
    <location>
        <begin position="112"/>
        <end position="121"/>
    </location>
</feature>
<feature type="disulfide bond" evidence="1">
    <location>
        <begin position="129"/>
        <end position="140"/>
    </location>
</feature>
<feature type="disulfide bond" evidence="1">
    <location>
        <begin position="136"/>
        <end position="149"/>
    </location>
</feature>
<feature type="disulfide bond" evidence="1">
    <location>
        <begin position="151"/>
        <end position="164"/>
    </location>
</feature>
<feature type="disulfide bond" description="Interchain (between light and heavy chains)" evidence="3 4 5">
    <location>
        <begin position="172"/>
        <end position="328"/>
    </location>
</feature>
<feature type="disulfide bond" evidence="1">
    <location>
        <begin position="236"/>
        <end position="252"/>
    </location>
</feature>
<feature type="disulfide bond" evidence="1">
    <location>
        <begin position="376"/>
        <end position="390"/>
    </location>
</feature>
<feature type="disulfide bond" evidence="1">
    <location>
        <begin position="401"/>
        <end position="429"/>
    </location>
</feature>
<feature type="sequence conflict" description="In Ref. 2; AA sequence." evidence="7" ref="2">
    <original>E</original>
    <variation>T</variation>
    <location>
        <position position="78"/>
    </location>
</feature>
<feature type="sequence conflict" description="In Ref. 2; AA sequence." evidence="7" ref="2">
    <original>H</original>
    <variation>R</variation>
    <location>
        <position position="98"/>
    </location>
</feature>
<feature type="sequence conflict" description="In Ref. 2; AA sequence." evidence="7" ref="2">
    <location>
        <begin position="260"/>
        <end position="270"/>
    </location>
</feature>
<feature type="sequence conflict" description="In Ref. 2; AA sequence." evidence="7" ref="2">
    <original>E</original>
    <variation>Q</variation>
    <location>
        <position position="402"/>
    </location>
</feature>
<sequence length="455" mass="51248">MAPQLLLCLILTFLWSVPEAESNVFLKSKVANRFLQRTKRSNSLFEEIRPGNIERECIEEKCSKEEAREVFEDNEKTETFWNVYVDGDQCSSNPCHYHGTCKDGIGSYTCTCLPNYEGKNCEKVLFKSCRAFNGNCWHFCKRVQSETQCSCAESYRLGVDGHSCVAEGDFSCGRNIKARNKREASLPDFVQSQKATLLKKSDNPSPDIRIVNGMDSKLGECPWQAVLINEKGEVFCGGTILSPIHVLTAAHCINQTKSVSVIVGEIDISRKETRRLLSVDKIYVHTKFVPPNYYYGHQNFDRVAYDYDIAIIRMKTPIQFSENVVPACLPTADFANEVLMKQDSGIVSGFGRIRFKEPTSNTLKVITVPYVDRHTCMLSSDFRITQNMFCAGYDTLPQDACEGDSGGPHITAYGDTHFITGIVSWGEGCARKGKYGVYTKVSRFIPWIKKIMSLK</sequence>
<reference key="1">
    <citation type="journal article" date="2005" name="Mol. Biol. Evol.">
        <title>Comparative analysis of prothrombin activators from the venom of Australian elapids.</title>
        <authorList>
            <person name="St Pierre L."/>
            <person name="Masci P.P."/>
            <person name="Filippovich I."/>
            <person name="Sorokina N."/>
            <person name="Marsh N."/>
            <person name="Miller D.J."/>
            <person name="Lavin M.F."/>
        </authorList>
    </citation>
    <scope>NUCLEOTIDE SEQUENCE [MRNA]</scope>
    <source>
        <tissue>Venom gland</tissue>
    </source>
</reference>
<reference key="2">
    <citation type="journal article" date="2003" name="Biochem. J.">
        <title>Group D prothrombin activators from snake venom are structural homologues of mammalian blood coagulation factor Xa.</title>
        <authorList>
            <person name="Rao V.S."/>
            <person name="Joseph J.S."/>
            <person name="Kini R.M."/>
        </authorList>
    </citation>
    <scope>PROTEIN SEQUENCE OF 41-181 AND 210-455</scope>
    <scope>FUNCTION</scope>
    <scope>CATALYTIC ACTIVITY</scope>
    <scope>SUBUNIT</scope>
    <scope>SUBCELLULAR LOCATION</scope>
    <scope>TISSUE SPECIFICITY</scope>
    <scope>GAMMA-CARBOXYGLUTAMATION AT GLU-46; GLU-47; GLU-54; GLU-56; GLU-59; GLU-60; GLU-65; GLU-66; GLU-69; GLU-72 AND GLU-75</scope>
    <scope>GLYCOSYLATION AT SER-92 AND ASN-254</scope>
    <scope>IDENTIFICATION BY MASS SPECTROMETRY</scope>
    <source>
        <tissue>Venom</tissue>
    </source>
</reference>
<reference key="3">
    <citation type="journal article" date="2001" name="Thromb. Haemost.">
        <title>Classification and nomenclature of prothrombin activators isolated from snake venoms.</title>
        <authorList>
            <person name="Manjunatha Kini R."/>
            <person name="Morita T."/>
            <person name="Rosing J."/>
        </authorList>
    </citation>
    <scope>NOMENCLATURE</scope>
</reference>
<name>FAXD_HOPST</name>
<organism evidence="7">
    <name type="scientific">Hoplocephalus stephensii</name>
    <name type="common">Stephens's banded snake</name>
    <dbReference type="NCBI Taxonomy" id="196418"/>
    <lineage>
        <taxon>Eukaryota</taxon>
        <taxon>Metazoa</taxon>
        <taxon>Chordata</taxon>
        <taxon>Craniata</taxon>
        <taxon>Vertebrata</taxon>
        <taxon>Euteleostomi</taxon>
        <taxon>Lepidosauria</taxon>
        <taxon>Squamata</taxon>
        <taxon>Bifurcata</taxon>
        <taxon>Unidentata</taxon>
        <taxon>Episquamata</taxon>
        <taxon>Toxicofera</taxon>
        <taxon>Serpentes</taxon>
        <taxon>Colubroidea</taxon>
        <taxon>Elapidae</taxon>
        <taxon>Notechinae</taxon>
        <taxon>Hoplocephalus</taxon>
    </lineage>
</organism>
<dbReference type="EC" id="3.4.21.6"/>
<dbReference type="EMBL" id="AY940208">
    <property type="protein sequence ID" value="AAX37264.1"/>
    <property type="molecule type" value="mRNA"/>
</dbReference>
<dbReference type="SMR" id="P83370"/>
<dbReference type="MEROPS" id="S01.426"/>
<dbReference type="iPTMnet" id="P83370"/>
<dbReference type="GO" id="GO:0005576">
    <property type="term" value="C:extracellular region"/>
    <property type="evidence" value="ECO:0000314"/>
    <property type="project" value="UniProtKB"/>
</dbReference>
<dbReference type="GO" id="GO:0005615">
    <property type="term" value="C:extracellular space"/>
    <property type="evidence" value="ECO:0007669"/>
    <property type="project" value="TreeGrafter"/>
</dbReference>
<dbReference type="GO" id="GO:0005509">
    <property type="term" value="F:calcium ion binding"/>
    <property type="evidence" value="ECO:0007669"/>
    <property type="project" value="InterPro"/>
</dbReference>
<dbReference type="GO" id="GO:0016504">
    <property type="term" value="F:peptidase activator activity"/>
    <property type="evidence" value="ECO:0007669"/>
    <property type="project" value="UniProtKB-KW"/>
</dbReference>
<dbReference type="GO" id="GO:0004252">
    <property type="term" value="F:serine-type endopeptidase activity"/>
    <property type="evidence" value="ECO:0000314"/>
    <property type="project" value="UniProtKB"/>
</dbReference>
<dbReference type="GO" id="GO:0090729">
    <property type="term" value="F:toxin activity"/>
    <property type="evidence" value="ECO:0007669"/>
    <property type="project" value="UniProtKB-KW"/>
</dbReference>
<dbReference type="GO" id="GO:0007596">
    <property type="term" value="P:blood coagulation"/>
    <property type="evidence" value="ECO:0007669"/>
    <property type="project" value="InterPro"/>
</dbReference>
<dbReference type="GO" id="GO:0035807">
    <property type="term" value="P:induction of blood coagulation in another organism"/>
    <property type="evidence" value="ECO:0007669"/>
    <property type="project" value="UniProtKB-ARBA"/>
</dbReference>
<dbReference type="GO" id="GO:0006508">
    <property type="term" value="P:proteolysis"/>
    <property type="evidence" value="ECO:0007669"/>
    <property type="project" value="UniProtKB-KW"/>
</dbReference>
<dbReference type="GO" id="GO:0044469">
    <property type="term" value="P:venom-mediated blood coagulation"/>
    <property type="evidence" value="ECO:0000314"/>
    <property type="project" value="UniProtKB"/>
</dbReference>
<dbReference type="CDD" id="cd00054">
    <property type="entry name" value="EGF_CA"/>
    <property type="match status" value="1"/>
</dbReference>
<dbReference type="CDD" id="cd00190">
    <property type="entry name" value="Tryp_SPc"/>
    <property type="match status" value="1"/>
</dbReference>
<dbReference type="FunFam" id="2.10.25.10:FF:000513">
    <property type="entry name" value="Coagulation factor VII"/>
    <property type="match status" value="1"/>
</dbReference>
<dbReference type="FunFam" id="2.10.25.10:FF:000162">
    <property type="entry name" value="Coagulation factor X (Predicted)"/>
    <property type="match status" value="1"/>
</dbReference>
<dbReference type="FunFam" id="4.10.740.10:FF:000001">
    <property type="entry name" value="vitamin K-dependent protein S"/>
    <property type="match status" value="1"/>
</dbReference>
<dbReference type="Gene3D" id="4.10.740.10">
    <property type="entry name" value="Coagulation Factor IX"/>
    <property type="match status" value="1"/>
</dbReference>
<dbReference type="Gene3D" id="2.10.25.10">
    <property type="entry name" value="Laminin"/>
    <property type="match status" value="2"/>
</dbReference>
<dbReference type="Gene3D" id="2.40.10.10">
    <property type="entry name" value="Trypsin-like serine proteases"/>
    <property type="match status" value="2"/>
</dbReference>
<dbReference type="InterPro" id="IPR017857">
    <property type="entry name" value="Coagulation_fac-like_Gla_dom"/>
</dbReference>
<dbReference type="InterPro" id="IPR001881">
    <property type="entry name" value="EGF-like_Ca-bd_dom"/>
</dbReference>
<dbReference type="InterPro" id="IPR000742">
    <property type="entry name" value="EGF-like_dom"/>
</dbReference>
<dbReference type="InterPro" id="IPR000152">
    <property type="entry name" value="EGF-type_Asp/Asn_hydroxyl_site"/>
</dbReference>
<dbReference type="InterPro" id="IPR018097">
    <property type="entry name" value="EGF_Ca-bd_CS"/>
</dbReference>
<dbReference type="InterPro" id="IPR035972">
    <property type="entry name" value="GLA-like_dom_SF"/>
</dbReference>
<dbReference type="InterPro" id="IPR000294">
    <property type="entry name" value="GLA_domain"/>
</dbReference>
<dbReference type="InterPro" id="IPR012224">
    <property type="entry name" value="Pept_S1A_FX"/>
</dbReference>
<dbReference type="InterPro" id="IPR050442">
    <property type="entry name" value="Peptidase_S1_coag_factors"/>
</dbReference>
<dbReference type="InterPro" id="IPR009003">
    <property type="entry name" value="Peptidase_S1_PA"/>
</dbReference>
<dbReference type="InterPro" id="IPR043504">
    <property type="entry name" value="Peptidase_S1_PA_chymotrypsin"/>
</dbReference>
<dbReference type="InterPro" id="IPR001314">
    <property type="entry name" value="Peptidase_S1A"/>
</dbReference>
<dbReference type="InterPro" id="IPR001254">
    <property type="entry name" value="Trypsin_dom"/>
</dbReference>
<dbReference type="InterPro" id="IPR018114">
    <property type="entry name" value="TRYPSIN_HIS"/>
</dbReference>
<dbReference type="InterPro" id="IPR033116">
    <property type="entry name" value="TRYPSIN_SER"/>
</dbReference>
<dbReference type="PANTHER" id="PTHR24278">
    <property type="entry name" value="COAGULATION FACTOR"/>
    <property type="match status" value="1"/>
</dbReference>
<dbReference type="PANTHER" id="PTHR24278:SF28">
    <property type="entry name" value="COAGULATION FACTOR X"/>
    <property type="match status" value="1"/>
</dbReference>
<dbReference type="Pfam" id="PF00008">
    <property type="entry name" value="EGF"/>
    <property type="match status" value="1"/>
</dbReference>
<dbReference type="Pfam" id="PF00594">
    <property type="entry name" value="Gla"/>
    <property type="match status" value="1"/>
</dbReference>
<dbReference type="Pfam" id="PF00089">
    <property type="entry name" value="Trypsin"/>
    <property type="match status" value="1"/>
</dbReference>
<dbReference type="PIRSF" id="PIRSF001143">
    <property type="entry name" value="Factor_X"/>
    <property type="match status" value="1"/>
</dbReference>
<dbReference type="PRINTS" id="PR00722">
    <property type="entry name" value="CHYMOTRYPSIN"/>
</dbReference>
<dbReference type="PRINTS" id="PR00001">
    <property type="entry name" value="GLABLOOD"/>
</dbReference>
<dbReference type="SMART" id="SM00181">
    <property type="entry name" value="EGF"/>
    <property type="match status" value="2"/>
</dbReference>
<dbReference type="SMART" id="SM00179">
    <property type="entry name" value="EGF_CA"/>
    <property type="match status" value="1"/>
</dbReference>
<dbReference type="SMART" id="SM00069">
    <property type="entry name" value="GLA"/>
    <property type="match status" value="1"/>
</dbReference>
<dbReference type="SMART" id="SM00020">
    <property type="entry name" value="Tryp_SPc"/>
    <property type="match status" value="1"/>
</dbReference>
<dbReference type="SUPFAM" id="SSF57630">
    <property type="entry name" value="GLA-domain"/>
    <property type="match status" value="1"/>
</dbReference>
<dbReference type="SUPFAM" id="SSF50494">
    <property type="entry name" value="Trypsin-like serine proteases"/>
    <property type="match status" value="1"/>
</dbReference>
<dbReference type="PROSITE" id="PS00010">
    <property type="entry name" value="ASX_HYDROXYL"/>
    <property type="match status" value="1"/>
</dbReference>
<dbReference type="PROSITE" id="PS00022">
    <property type="entry name" value="EGF_1"/>
    <property type="match status" value="1"/>
</dbReference>
<dbReference type="PROSITE" id="PS50026">
    <property type="entry name" value="EGF_3"/>
    <property type="match status" value="1"/>
</dbReference>
<dbReference type="PROSITE" id="PS01187">
    <property type="entry name" value="EGF_CA"/>
    <property type="match status" value="1"/>
</dbReference>
<dbReference type="PROSITE" id="PS00011">
    <property type="entry name" value="GLA_1"/>
    <property type="match status" value="1"/>
</dbReference>
<dbReference type="PROSITE" id="PS50998">
    <property type="entry name" value="GLA_2"/>
    <property type="match status" value="1"/>
</dbReference>
<dbReference type="PROSITE" id="PS50240">
    <property type="entry name" value="TRYPSIN_DOM"/>
    <property type="match status" value="1"/>
</dbReference>
<dbReference type="PROSITE" id="PS00134">
    <property type="entry name" value="TRYPSIN_HIS"/>
    <property type="match status" value="1"/>
</dbReference>
<dbReference type="PROSITE" id="PS00135">
    <property type="entry name" value="TRYPSIN_SER"/>
    <property type="match status" value="1"/>
</dbReference>
<keyword id="KW-1204">Blood coagulation cascade activating toxin</keyword>
<keyword id="KW-0106">Calcium</keyword>
<keyword id="KW-0903">Direct protein sequencing</keyword>
<keyword id="KW-1015">Disulfide bond</keyword>
<keyword id="KW-0245">EGF-like domain</keyword>
<keyword id="KW-0301">Gamma-carboxyglutamic acid</keyword>
<keyword id="KW-0325">Glycoprotein</keyword>
<keyword id="KW-1199">Hemostasis impairing toxin</keyword>
<keyword id="KW-0378">Hydrolase</keyword>
<keyword id="KW-0645">Protease</keyword>
<keyword id="KW-0655">Prothrombin activator</keyword>
<keyword id="KW-0677">Repeat</keyword>
<keyword id="KW-0964">Secreted</keyword>
<keyword id="KW-0720">Serine protease</keyword>
<keyword id="KW-0732">Signal</keyword>
<keyword id="KW-0800">Toxin</keyword>